<sequence>MNFFQAIILAIAQGVSELFPISSVAHSVIIPYLFGWKLSPFFLKTNFLEFVVMMHIGTTISLIVYFRKDWKKMLKSLFNKKTSKRNLALIVIGTIPAIILGAIFEQTITNAFSDVIVASIFLIFNGLLLFFGEQTKKRGNKSIEDLKGWQALVIGCFQSLALIPGFSRSGSSITAGFWMGLSNEESARFSMLLSTPMVAGAATLEIPKLIKNHVPGLLSLSLIGGIVAGLAAFLSIYILMHWFNHKKNNTMLPFAIYCIVIGIGVLASKAI</sequence>
<comment type="function">
    <text evidence="1">Catalyzes the dephosphorylation of undecaprenyl diphosphate (UPP). Confers resistance to bacitracin.</text>
</comment>
<comment type="catalytic activity">
    <reaction evidence="1">
        <text>di-trans,octa-cis-undecaprenyl diphosphate + H2O = di-trans,octa-cis-undecaprenyl phosphate + phosphate + H(+)</text>
        <dbReference type="Rhea" id="RHEA:28094"/>
        <dbReference type="ChEBI" id="CHEBI:15377"/>
        <dbReference type="ChEBI" id="CHEBI:15378"/>
        <dbReference type="ChEBI" id="CHEBI:43474"/>
        <dbReference type="ChEBI" id="CHEBI:58405"/>
        <dbReference type="ChEBI" id="CHEBI:60392"/>
        <dbReference type="EC" id="3.6.1.27"/>
    </reaction>
</comment>
<comment type="subcellular location">
    <subcellularLocation>
        <location evidence="1">Cell membrane</location>
        <topology evidence="1">Multi-pass membrane protein</topology>
    </subcellularLocation>
</comment>
<comment type="miscellaneous">
    <text>Bacitracin is thought to be involved in the inhibition of peptidoglycan synthesis by sequestering undecaprenyl diphosphate, thereby reducing the pool of lipid carrier available.</text>
</comment>
<comment type="similarity">
    <text evidence="1">Belongs to the UppP family.</text>
</comment>
<dbReference type="EC" id="3.6.1.27" evidence="1"/>
<dbReference type="EMBL" id="CP000411">
    <property type="protein sequence ID" value="ABJ57657.1"/>
    <property type="molecule type" value="Genomic_DNA"/>
</dbReference>
<dbReference type="RefSeq" id="WP_002821475.1">
    <property type="nucleotide sequence ID" value="NC_008528.1"/>
</dbReference>
<dbReference type="SMR" id="Q04D15"/>
<dbReference type="STRING" id="203123.OEOE_1821"/>
<dbReference type="KEGG" id="ooe:OEOE_1821"/>
<dbReference type="PATRIC" id="fig|203123.7.peg.1862"/>
<dbReference type="eggNOG" id="COG1968">
    <property type="taxonomic scope" value="Bacteria"/>
</dbReference>
<dbReference type="HOGENOM" id="CLU_060296_1_1_9"/>
<dbReference type="Proteomes" id="UP000000774">
    <property type="component" value="Chromosome"/>
</dbReference>
<dbReference type="GO" id="GO:0005886">
    <property type="term" value="C:plasma membrane"/>
    <property type="evidence" value="ECO:0007669"/>
    <property type="project" value="UniProtKB-SubCell"/>
</dbReference>
<dbReference type="GO" id="GO:0050380">
    <property type="term" value="F:undecaprenyl-diphosphatase activity"/>
    <property type="evidence" value="ECO:0007669"/>
    <property type="project" value="UniProtKB-UniRule"/>
</dbReference>
<dbReference type="GO" id="GO:0071555">
    <property type="term" value="P:cell wall organization"/>
    <property type="evidence" value="ECO:0007669"/>
    <property type="project" value="UniProtKB-KW"/>
</dbReference>
<dbReference type="GO" id="GO:0009252">
    <property type="term" value="P:peptidoglycan biosynthetic process"/>
    <property type="evidence" value="ECO:0007669"/>
    <property type="project" value="UniProtKB-KW"/>
</dbReference>
<dbReference type="GO" id="GO:0008360">
    <property type="term" value="P:regulation of cell shape"/>
    <property type="evidence" value="ECO:0007669"/>
    <property type="project" value="UniProtKB-KW"/>
</dbReference>
<dbReference type="GO" id="GO:0046677">
    <property type="term" value="P:response to antibiotic"/>
    <property type="evidence" value="ECO:0007669"/>
    <property type="project" value="UniProtKB-UniRule"/>
</dbReference>
<dbReference type="HAMAP" id="MF_01006">
    <property type="entry name" value="Undec_diphosphatase"/>
    <property type="match status" value="1"/>
</dbReference>
<dbReference type="InterPro" id="IPR003824">
    <property type="entry name" value="UppP"/>
</dbReference>
<dbReference type="PANTHER" id="PTHR30622">
    <property type="entry name" value="UNDECAPRENYL-DIPHOSPHATASE"/>
    <property type="match status" value="1"/>
</dbReference>
<dbReference type="PANTHER" id="PTHR30622:SF4">
    <property type="entry name" value="UNDECAPRENYL-DIPHOSPHATASE"/>
    <property type="match status" value="1"/>
</dbReference>
<dbReference type="Pfam" id="PF02673">
    <property type="entry name" value="BacA"/>
    <property type="match status" value="1"/>
</dbReference>
<feature type="chain" id="PRO_0000290740" description="Undecaprenyl-diphosphatase 2">
    <location>
        <begin position="1"/>
        <end position="271"/>
    </location>
</feature>
<feature type="transmembrane region" description="Helical" evidence="1">
    <location>
        <begin position="1"/>
        <end position="21"/>
    </location>
</feature>
<feature type="transmembrane region" description="Helical" evidence="1">
    <location>
        <begin position="46"/>
        <end position="66"/>
    </location>
</feature>
<feature type="transmembrane region" description="Helical" evidence="1">
    <location>
        <begin position="88"/>
        <end position="108"/>
    </location>
</feature>
<feature type="transmembrane region" description="Helical" evidence="1">
    <location>
        <begin position="111"/>
        <end position="131"/>
    </location>
</feature>
<feature type="transmembrane region" description="Helical" evidence="1">
    <location>
        <begin position="146"/>
        <end position="166"/>
    </location>
</feature>
<feature type="transmembrane region" description="Helical" evidence="1">
    <location>
        <begin position="190"/>
        <end position="210"/>
    </location>
</feature>
<feature type="transmembrane region" description="Helical" evidence="1">
    <location>
        <begin position="220"/>
        <end position="240"/>
    </location>
</feature>
<feature type="transmembrane region" description="Helical" evidence="1">
    <location>
        <begin position="251"/>
        <end position="271"/>
    </location>
</feature>
<name>UPPP2_OENOB</name>
<evidence type="ECO:0000255" key="1">
    <source>
        <dbReference type="HAMAP-Rule" id="MF_01006"/>
    </source>
</evidence>
<protein>
    <recommendedName>
        <fullName evidence="1">Undecaprenyl-diphosphatase 2</fullName>
        <ecNumber evidence="1">3.6.1.27</ecNumber>
    </recommendedName>
    <alternativeName>
        <fullName evidence="1">Bacitracin resistance protein 2</fullName>
    </alternativeName>
    <alternativeName>
        <fullName evidence="1">Undecaprenyl pyrophosphate phosphatase 2</fullName>
    </alternativeName>
</protein>
<reference key="1">
    <citation type="journal article" date="2006" name="Proc. Natl. Acad. Sci. U.S.A.">
        <title>Comparative genomics of the lactic acid bacteria.</title>
        <authorList>
            <person name="Makarova K.S."/>
            <person name="Slesarev A."/>
            <person name="Wolf Y.I."/>
            <person name="Sorokin A."/>
            <person name="Mirkin B."/>
            <person name="Koonin E.V."/>
            <person name="Pavlov A."/>
            <person name="Pavlova N."/>
            <person name="Karamychev V."/>
            <person name="Polouchine N."/>
            <person name="Shakhova V."/>
            <person name="Grigoriev I."/>
            <person name="Lou Y."/>
            <person name="Rohksar D."/>
            <person name="Lucas S."/>
            <person name="Huang K."/>
            <person name="Goodstein D.M."/>
            <person name="Hawkins T."/>
            <person name="Plengvidhya V."/>
            <person name="Welker D."/>
            <person name="Hughes J."/>
            <person name="Goh Y."/>
            <person name="Benson A."/>
            <person name="Baldwin K."/>
            <person name="Lee J.-H."/>
            <person name="Diaz-Muniz I."/>
            <person name="Dosti B."/>
            <person name="Smeianov V."/>
            <person name="Wechter W."/>
            <person name="Barabote R."/>
            <person name="Lorca G."/>
            <person name="Altermann E."/>
            <person name="Barrangou R."/>
            <person name="Ganesan B."/>
            <person name="Xie Y."/>
            <person name="Rawsthorne H."/>
            <person name="Tamir D."/>
            <person name="Parker C."/>
            <person name="Breidt F."/>
            <person name="Broadbent J.R."/>
            <person name="Hutkins R."/>
            <person name="O'Sullivan D."/>
            <person name="Steele J."/>
            <person name="Unlu G."/>
            <person name="Saier M.H. Jr."/>
            <person name="Klaenhammer T."/>
            <person name="Richardson P."/>
            <person name="Kozyavkin S."/>
            <person name="Weimer B.C."/>
            <person name="Mills D.A."/>
        </authorList>
    </citation>
    <scope>NUCLEOTIDE SEQUENCE [LARGE SCALE GENOMIC DNA]</scope>
    <source>
        <strain>ATCC BAA-331 / PSU-1</strain>
    </source>
</reference>
<gene>
    <name evidence="1" type="primary">uppP2</name>
    <name type="ordered locus">OEOE_1821</name>
</gene>
<accession>Q04D15</accession>
<organism>
    <name type="scientific">Oenococcus oeni (strain ATCC BAA-331 / PSU-1)</name>
    <dbReference type="NCBI Taxonomy" id="203123"/>
    <lineage>
        <taxon>Bacteria</taxon>
        <taxon>Bacillati</taxon>
        <taxon>Bacillota</taxon>
        <taxon>Bacilli</taxon>
        <taxon>Lactobacillales</taxon>
        <taxon>Lactobacillaceae</taxon>
        <taxon>Oenococcus</taxon>
    </lineage>
</organism>
<keyword id="KW-0046">Antibiotic resistance</keyword>
<keyword id="KW-1003">Cell membrane</keyword>
<keyword id="KW-0133">Cell shape</keyword>
<keyword id="KW-0961">Cell wall biogenesis/degradation</keyword>
<keyword id="KW-0378">Hydrolase</keyword>
<keyword id="KW-0472">Membrane</keyword>
<keyword id="KW-0573">Peptidoglycan synthesis</keyword>
<keyword id="KW-1185">Reference proteome</keyword>
<keyword id="KW-0812">Transmembrane</keyword>
<keyword id="KW-1133">Transmembrane helix</keyword>
<proteinExistence type="inferred from homology"/>